<protein>
    <recommendedName>
        <fullName evidence="1">Small ribosomal subunit protein uS2</fullName>
    </recommendedName>
    <alternativeName>
        <fullName evidence="3">30S ribosomal protein S2</fullName>
    </alternativeName>
</protein>
<accession>Q0RDQ4</accession>
<organism>
    <name type="scientific">Frankia alni (strain DSM 45986 / CECT 9034 / ACN14a)</name>
    <dbReference type="NCBI Taxonomy" id="326424"/>
    <lineage>
        <taxon>Bacteria</taxon>
        <taxon>Bacillati</taxon>
        <taxon>Actinomycetota</taxon>
        <taxon>Actinomycetes</taxon>
        <taxon>Frankiales</taxon>
        <taxon>Frankiaceae</taxon>
        <taxon>Frankia</taxon>
    </lineage>
</organism>
<reference key="1">
    <citation type="journal article" date="2007" name="Genome Res.">
        <title>Genome characteristics of facultatively symbiotic Frankia sp. strains reflect host range and host plant biogeography.</title>
        <authorList>
            <person name="Normand P."/>
            <person name="Lapierre P."/>
            <person name="Tisa L.S."/>
            <person name="Gogarten J.P."/>
            <person name="Alloisio N."/>
            <person name="Bagnarol E."/>
            <person name="Bassi C.A."/>
            <person name="Berry A.M."/>
            <person name="Bickhart D.M."/>
            <person name="Choisne N."/>
            <person name="Couloux A."/>
            <person name="Cournoyer B."/>
            <person name="Cruveiller S."/>
            <person name="Daubin V."/>
            <person name="Demange N."/>
            <person name="Francino M.P."/>
            <person name="Goltsman E."/>
            <person name="Huang Y."/>
            <person name="Kopp O.R."/>
            <person name="Labarre L."/>
            <person name="Lapidus A."/>
            <person name="Lavire C."/>
            <person name="Marechal J."/>
            <person name="Martinez M."/>
            <person name="Mastronunzio J.E."/>
            <person name="Mullin B.C."/>
            <person name="Niemann J."/>
            <person name="Pujic P."/>
            <person name="Rawnsley T."/>
            <person name="Rouy Z."/>
            <person name="Schenowitz C."/>
            <person name="Sellstedt A."/>
            <person name="Tavares F."/>
            <person name="Tomkins J.P."/>
            <person name="Vallenet D."/>
            <person name="Valverde C."/>
            <person name="Wall L.G."/>
            <person name="Wang Y."/>
            <person name="Medigue C."/>
            <person name="Benson D.R."/>
        </authorList>
    </citation>
    <scope>NUCLEOTIDE SEQUENCE [LARGE SCALE GENOMIC DNA]</scope>
    <source>
        <strain>DSM 45986 / CECT 9034 / ACN14a</strain>
    </source>
</reference>
<keyword id="KW-1185">Reference proteome</keyword>
<keyword id="KW-0687">Ribonucleoprotein</keyword>
<keyword id="KW-0689">Ribosomal protein</keyword>
<dbReference type="EMBL" id="CT573213">
    <property type="protein sequence ID" value="CAJ64412.1"/>
    <property type="status" value="ALT_INIT"/>
    <property type="molecule type" value="Genomic_DNA"/>
</dbReference>
<dbReference type="RefSeq" id="WP_041939759.1">
    <property type="nucleotide sequence ID" value="NC_008278.1"/>
</dbReference>
<dbReference type="SMR" id="Q0RDQ4"/>
<dbReference type="STRING" id="326424.FRAAL5780"/>
<dbReference type="KEGG" id="fal:FRAAL5780"/>
<dbReference type="eggNOG" id="COG0052">
    <property type="taxonomic scope" value="Bacteria"/>
</dbReference>
<dbReference type="HOGENOM" id="CLU_040318_2_3_11"/>
<dbReference type="OrthoDB" id="9808036at2"/>
<dbReference type="Proteomes" id="UP000000657">
    <property type="component" value="Chromosome"/>
</dbReference>
<dbReference type="GO" id="GO:0022627">
    <property type="term" value="C:cytosolic small ribosomal subunit"/>
    <property type="evidence" value="ECO:0007669"/>
    <property type="project" value="TreeGrafter"/>
</dbReference>
<dbReference type="GO" id="GO:0003735">
    <property type="term" value="F:structural constituent of ribosome"/>
    <property type="evidence" value="ECO:0007669"/>
    <property type="project" value="InterPro"/>
</dbReference>
<dbReference type="GO" id="GO:0006412">
    <property type="term" value="P:translation"/>
    <property type="evidence" value="ECO:0007669"/>
    <property type="project" value="UniProtKB-UniRule"/>
</dbReference>
<dbReference type="CDD" id="cd01425">
    <property type="entry name" value="RPS2"/>
    <property type="match status" value="1"/>
</dbReference>
<dbReference type="FunFam" id="1.10.287.610:FF:000001">
    <property type="entry name" value="30S ribosomal protein S2"/>
    <property type="match status" value="1"/>
</dbReference>
<dbReference type="Gene3D" id="3.40.50.10490">
    <property type="entry name" value="Glucose-6-phosphate isomerase like protein, domain 1"/>
    <property type="match status" value="1"/>
</dbReference>
<dbReference type="Gene3D" id="1.10.287.610">
    <property type="entry name" value="Helix hairpin bin"/>
    <property type="match status" value="1"/>
</dbReference>
<dbReference type="HAMAP" id="MF_00291_B">
    <property type="entry name" value="Ribosomal_uS2_B"/>
    <property type="match status" value="1"/>
</dbReference>
<dbReference type="InterPro" id="IPR001865">
    <property type="entry name" value="Ribosomal_uS2"/>
</dbReference>
<dbReference type="InterPro" id="IPR005706">
    <property type="entry name" value="Ribosomal_uS2_bac/mit/plastid"/>
</dbReference>
<dbReference type="InterPro" id="IPR018130">
    <property type="entry name" value="Ribosomal_uS2_CS"/>
</dbReference>
<dbReference type="InterPro" id="IPR023591">
    <property type="entry name" value="Ribosomal_uS2_flav_dom_sf"/>
</dbReference>
<dbReference type="NCBIfam" id="TIGR01011">
    <property type="entry name" value="rpsB_bact"/>
    <property type="match status" value="1"/>
</dbReference>
<dbReference type="PANTHER" id="PTHR12534">
    <property type="entry name" value="30S RIBOSOMAL PROTEIN S2 PROKARYOTIC AND ORGANELLAR"/>
    <property type="match status" value="1"/>
</dbReference>
<dbReference type="PANTHER" id="PTHR12534:SF0">
    <property type="entry name" value="SMALL RIBOSOMAL SUBUNIT PROTEIN US2M"/>
    <property type="match status" value="1"/>
</dbReference>
<dbReference type="Pfam" id="PF00318">
    <property type="entry name" value="Ribosomal_S2"/>
    <property type="match status" value="1"/>
</dbReference>
<dbReference type="PRINTS" id="PR00395">
    <property type="entry name" value="RIBOSOMALS2"/>
</dbReference>
<dbReference type="SUPFAM" id="SSF52313">
    <property type="entry name" value="Ribosomal protein S2"/>
    <property type="match status" value="1"/>
</dbReference>
<dbReference type="PROSITE" id="PS00962">
    <property type="entry name" value="RIBOSOMAL_S2_1"/>
    <property type="match status" value="1"/>
</dbReference>
<proteinExistence type="inferred from homology"/>
<sequence>MAVVTMKQLLESGVHFGHQTKRWNPKMKRYIFTERNGIYIIDLQQTLSYIDRAYDFVKETVAHGGTVLFIGTKKQAQEAIEEQAARVGMPYVKERWLGGMLTNFSTVYKRLQRLKELEEIEVTGGTEVRTKKEQLVLTREKAKLERTLGGIRDMSRVPSAVWVVDTKKEHIAVGEARKLGIPVVAILDTNCDPDEVDYPIPGNDDAIRSAALLTRVVADAVADGLMARAGASKAADAKPEQSAGEEPLAEWEQALLRGEGTAPAASEEQPAEEPAPAAAEAQTDAAVGTAV</sequence>
<feature type="chain" id="PRO_0000351993" description="Small ribosomal subunit protein uS2">
    <location>
        <begin position="1"/>
        <end position="291"/>
    </location>
</feature>
<feature type="region of interest" description="Disordered" evidence="2">
    <location>
        <begin position="256"/>
        <end position="291"/>
    </location>
</feature>
<feature type="compositionally biased region" description="Low complexity" evidence="2">
    <location>
        <begin position="261"/>
        <end position="291"/>
    </location>
</feature>
<evidence type="ECO:0000255" key="1">
    <source>
        <dbReference type="HAMAP-Rule" id="MF_00291"/>
    </source>
</evidence>
<evidence type="ECO:0000256" key="2">
    <source>
        <dbReference type="SAM" id="MobiDB-lite"/>
    </source>
</evidence>
<evidence type="ECO:0000305" key="3"/>
<gene>
    <name evidence="1" type="primary">rpsB</name>
    <name type="ordered locus">FRAAL5780</name>
</gene>
<name>RS2_FRAAA</name>
<comment type="similarity">
    <text evidence="1">Belongs to the universal ribosomal protein uS2 family.</text>
</comment>
<comment type="sequence caution" evidence="3">
    <conflict type="erroneous initiation">
        <sequence resource="EMBL-CDS" id="CAJ64412"/>
    </conflict>
</comment>